<comment type="function">
    <text evidence="1">Bifunctional serine/threonine kinase and phosphorylase involved in the regulation of the pyruvate, phosphate dikinase (PPDK) by catalyzing its phosphorylation/dephosphorylation.</text>
</comment>
<comment type="catalytic activity">
    <reaction evidence="1">
        <text>N(tele)-phospho-L-histidyl/L-threonyl-[pyruvate, phosphate dikinase] + ADP = N(tele)-phospho-L-histidyl/O-phospho-L-threonyl-[pyruvate, phosphate dikinase] + AMP + H(+)</text>
        <dbReference type="Rhea" id="RHEA:43692"/>
        <dbReference type="Rhea" id="RHEA-COMP:10650"/>
        <dbReference type="Rhea" id="RHEA-COMP:10651"/>
        <dbReference type="ChEBI" id="CHEBI:15378"/>
        <dbReference type="ChEBI" id="CHEBI:30013"/>
        <dbReference type="ChEBI" id="CHEBI:61977"/>
        <dbReference type="ChEBI" id="CHEBI:83586"/>
        <dbReference type="ChEBI" id="CHEBI:456215"/>
        <dbReference type="ChEBI" id="CHEBI:456216"/>
        <dbReference type="EC" id="2.7.11.32"/>
    </reaction>
</comment>
<comment type="catalytic activity">
    <reaction evidence="1">
        <text>N(tele)-phospho-L-histidyl/O-phospho-L-threonyl-[pyruvate, phosphate dikinase] + phosphate + H(+) = N(tele)-phospho-L-histidyl/L-threonyl-[pyruvate, phosphate dikinase] + diphosphate</text>
        <dbReference type="Rhea" id="RHEA:43696"/>
        <dbReference type="Rhea" id="RHEA-COMP:10650"/>
        <dbReference type="Rhea" id="RHEA-COMP:10651"/>
        <dbReference type="ChEBI" id="CHEBI:15378"/>
        <dbReference type="ChEBI" id="CHEBI:30013"/>
        <dbReference type="ChEBI" id="CHEBI:33019"/>
        <dbReference type="ChEBI" id="CHEBI:43474"/>
        <dbReference type="ChEBI" id="CHEBI:61977"/>
        <dbReference type="ChEBI" id="CHEBI:83586"/>
        <dbReference type="EC" id="2.7.4.27"/>
    </reaction>
</comment>
<comment type="similarity">
    <text evidence="1">Belongs to the pyruvate, phosphate/water dikinase regulatory protein family. PDRP subfamily.</text>
</comment>
<gene>
    <name type="ordered locus">Ldb1256</name>
</gene>
<sequence length="285" mass="32114">MTENKAENKQTEKTEKMEVNIIIISDSAGETAFNNAQAAAVQFPDAEVNYRRYPFIVNEKKLAATLEEIEQYPNLVIVYSMLDEKLQLPIIKFAREHKARYIDILSPIIEAISQTTHMKPTGLVGANHQLTNKYFNRISAMEFAVMYDDGKDPRGFLEADVVLLGVSRTSKTPLSLLLANKGLKVANLPLVPQTHIPNEIYQIDPTKIIGLTTDPQVLNRIRRQRMISYGMDPDTAYSNMDSINAELDSAMALYKKLGCFVINVAERSIEETAALIMNHLSYEED</sequence>
<dbReference type="EC" id="2.7.11.32" evidence="1"/>
<dbReference type="EC" id="2.7.4.27" evidence="1"/>
<dbReference type="EMBL" id="CR954253">
    <property type="protein sequence ID" value="CAI98058.1"/>
    <property type="molecule type" value="Genomic_DNA"/>
</dbReference>
<dbReference type="RefSeq" id="WP_003618707.1">
    <property type="nucleotide sequence ID" value="NZ_JQAV01000005.1"/>
</dbReference>
<dbReference type="SMR" id="Q1G9W1"/>
<dbReference type="STRING" id="390333.Ldb1256"/>
<dbReference type="KEGG" id="ldb:Ldb1256"/>
<dbReference type="eggNOG" id="COG1806">
    <property type="taxonomic scope" value="Bacteria"/>
</dbReference>
<dbReference type="HOGENOM" id="CLU_046206_2_1_9"/>
<dbReference type="BioCyc" id="LDEL390333:LDB_RS05350-MONOMER"/>
<dbReference type="Proteomes" id="UP000001259">
    <property type="component" value="Chromosome"/>
</dbReference>
<dbReference type="GO" id="GO:0043531">
    <property type="term" value="F:ADP binding"/>
    <property type="evidence" value="ECO:0007669"/>
    <property type="project" value="UniProtKB-UniRule"/>
</dbReference>
<dbReference type="GO" id="GO:0005524">
    <property type="term" value="F:ATP binding"/>
    <property type="evidence" value="ECO:0007669"/>
    <property type="project" value="InterPro"/>
</dbReference>
<dbReference type="GO" id="GO:0016776">
    <property type="term" value="F:phosphotransferase activity, phosphate group as acceptor"/>
    <property type="evidence" value="ECO:0007669"/>
    <property type="project" value="UniProtKB-UniRule"/>
</dbReference>
<dbReference type="GO" id="GO:0004674">
    <property type="term" value="F:protein serine/threonine kinase activity"/>
    <property type="evidence" value="ECO:0007669"/>
    <property type="project" value="UniProtKB-UniRule"/>
</dbReference>
<dbReference type="HAMAP" id="MF_00921">
    <property type="entry name" value="PDRP"/>
    <property type="match status" value="1"/>
</dbReference>
<dbReference type="InterPro" id="IPR005177">
    <property type="entry name" value="Kinase-pyrophosphorylase"/>
</dbReference>
<dbReference type="InterPro" id="IPR027417">
    <property type="entry name" value="P-loop_NTPase"/>
</dbReference>
<dbReference type="InterPro" id="IPR026565">
    <property type="entry name" value="PPDK_reg"/>
</dbReference>
<dbReference type="NCBIfam" id="NF003742">
    <property type="entry name" value="PRK05339.1"/>
    <property type="match status" value="1"/>
</dbReference>
<dbReference type="PANTHER" id="PTHR31756">
    <property type="entry name" value="PYRUVATE, PHOSPHATE DIKINASE REGULATORY PROTEIN 1, CHLOROPLASTIC"/>
    <property type="match status" value="1"/>
</dbReference>
<dbReference type="PANTHER" id="PTHR31756:SF3">
    <property type="entry name" value="PYRUVATE, PHOSPHATE DIKINASE REGULATORY PROTEIN 1, CHLOROPLASTIC"/>
    <property type="match status" value="1"/>
</dbReference>
<dbReference type="Pfam" id="PF03618">
    <property type="entry name" value="Kinase-PPPase"/>
    <property type="match status" value="1"/>
</dbReference>
<dbReference type="SUPFAM" id="SSF52540">
    <property type="entry name" value="P-loop containing nucleoside triphosphate hydrolases"/>
    <property type="match status" value="1"/>
</dbReference>
<name>PDRP_LACDA</name>
<evidence type="ECO:0000255" key="1">
    <source>
        <dbReference type="HAMAP-Rule" id="MF_00921"/>
    </source>
</evidence>
<protein>
    <recommendedName>
        <fullName evidence="1">Putative pyruvate, phosphate dikinase regulatory protein</fullName>
        <shortName evidence="1">PPDK regulatory protein</shortName>
        <ecNumber evidence="1">2.7.11.32</ecNumber>
        <ecNumber evidence="1">2.7.4.27</ecNumber>
    </recommendedName>
</protein>
<organism>
    <name type="scientific">Lactobacillus delbrueckii subsp. bulgaricus (strain ATCC 11842 / DSM 20081 / BCRC 10696 / JCM 1002 / NBRC 13953 / NCIMB 11778 / NCTC 12712 / WDCM 00102 / Lb 14)</name>
    <dbReference type="NCBI Taxonomy" id="390333"/>
    <lineage>
        <taxon>Bacteria</taxon>
        <taxon>Bacillati</taxon>
        <taxon>Bacillota</taxon>
        <taxon>Bacilli</taxon>
        <taxon>Lactobacillales</taxon>
        <taxon>Lactobacillaceae</taxon>
        <taxon>Lactobacillus</taxon>
    </lineage>
</organism>
<proteinExistence type="inferred from homology"/>
<reference key="1">
    <citation type="journal article" date="2006" name="Proc. Natl. Acad. Sci. U.S.A.">
        <title>The complete genome sequence of Lactobacillus bulgaricus reveals extensive and ongoing reductive evolution.</title>
        <authorList>
            <person name="van de Guchte M."/>
            <person name="Penaud S."/>
            <person name="Grimaldi C."/>
            <person name="Barbe V."/>
            <person name="Bryson K."/>
            <person name="Nicolas P."/>
            <person name="Robert C."/>
            <person name="Oztas S."/>
            <person name="Mangenot S."/>
            <person name="Couloux A."/>
            <person name="Loux V."/>
            <person name="Dervyn R."/>
            <person name="Bossy R."/>
            <person name="Bolotin A."/>
            <person name="Batto J.-M."/>
            <person name="Walunas T."/>
            <person name="Gibrat J.-F."/>
            <person name="Bessieres P."/>
            <person name="Weissenbach J."/>
            <person name="Ehrlich S.D."/>
            <person name="Maguin E."/>
        </authorList>
    </citation>
    <scope>NUCLEOTIDE SEQUENCE [LARGE SCALE GENOMIC DNA]</scope>
    <source>
        <strain>ATCC 11842 / DSM 20081 / BCRC 10696 / JCM 1002 / NBRC 13953 / NCIMB 11778 / NCTC 12712 / WDCM 00102 / Lb 14</strain>
    </source>
</reference>
<accession>Q1G9W1</accession>
<keyword id="KW-0418">Kinase</keyword>
<keyword id="KW-0547">Nucleotide-binding</keyword>
<keyword id="KW-1185">Reference proteome</keyword>
<keyword id="KW-0723">Serine/threonine-protein kinase</keyword>
<keyword id="KW-0808">Transferase</keyword>
<feature type="chain" id="PRO_0000316687" description="Putative pyruvate, phosphate dikinase regulatory protein">
    <location>
        <begin position="1"/>
        <end position="285"/>
    </location>
</feature>
<feature type="binding site" evidence="1">
    <location>
        <begin position="165"/>
        <end position="172"/>
    </location>
    <ligand>
        <name>ADP</name>
        <dbReference type="ChEBI" id="CHEBI:456216"/>
    </ligand>
</feature>